<evidence type="ECO:0000255" key="1"/>
<evidence type="ECO:0000255" key="2">
    <source>
        <dbReference type="PROSITE-ProRule" id="PRU00411"/>
    </source>
</evidence>
<evidence type="ECO:0000269" key="3">
    <source>
    </source>
</evidence>
<evidence type="ECO:0000269" key="4">
    <source>
    </source>
</evidence>
<evidence type="ECO:0000269" key="5">
    <source>
    </source>
</evidence>
<evidence type="ECO:0000269" key="6">
    <source>
    </source>
</evidence>
<evidence type="ECO:0000305" key="7"/>
<dbReference type="EMBL" id="AE008918">
    <property type="protein sequence ID" value="AAL54358.1"/>
    <property type="status" value="ALT_INIT"/>
    <property type="molecule type" value="Genomic_DNA"/>
</dbReference>
<dbReference type="PIR" id="AC3649">
    <property type="entry name" value="AC3649"/>
</dbReference>
<dbReference type="RefSeq" id="WP_002966460.1">
    <property type="nucleotide sequence ID" value="NZ_GG703779.1"/>
</dbReference>
<dbReference type="SMR" id="Q8YAY5"/>
<dbReference type="GeneID" id="93015909"/>
<dbReference type="KEGG" id="bme:BMEII1116"/>
<dbReference type="KEGG" id="bmel:DK63_2141"/>
<dbReference type="PATRIC" id="fig|224914.52.peg.2242"/>
<dbReference type="eggNOG" id="COG2771">
    <property type="taxonomic scope" value="Bacteria"/>
</dbReference>
<dbReference type="PhylomeDB" id="Q8YAY5"/>
<dbReference type="PRO" id="PR:Q8YAY5"/>
<dbReference type="Proteomes" id="UP000000419">
    <property type="component" value="Chromosome II"/>
</dbReference>
<dbReference type="GO" id="GO:0003677">
    <property type="term" value="F:DNA binding"/>
    <property type="evidence" value="ECO:0007669"/>
    <property type="project" value="UniProtKB-KW"/>
</dbReference>
<dbReference type="GO" id="GO:0009372">
    <property type="term" value="P:quorum sensing"/>
    <property type="evidence" value="ECO:0007669"/>
    <property type="project" value="UniProtKB-KW"/>
</dbReference>
<dbReference type="GO" id="GO:0006355">
    <property type="term" value="P:regulation of DNA-templated transcription"/>
    <property type="evidence" value="ECO:0007669"/>
    <property type="project" value="InterPro"/>
</dbReference>
<dbReference type="CDD" id="cd06170">
    <property type="entry name" value="LuxR_C_like"/>
    <property type="match status" value="1"/>
</dbReference>
<dbReference type="Gene3D" id="3.30.450.80">
    <property type="entry name" value="Transcription factor LuxR-like, autoinducer-binding domain"/>
    <property type="match status" value="1"/>
</dbReference>
<dbReference type="Gene3D" id="1.10.10.10">
    <property type="entry name" value="Winged helix-like DNA-binding domain superfamily/Winged helix DNA-binding domain"/>
    <property type="match status" value="1"/>
</dbReference>
<dbReference type="InterPro" id="IPR016032">
    <property type="entry name" value="Sig_transdc_resp-reg_C-effctor"/>
</dbReference>
<dbReference type="InterPro" id="IPR005143">
    <property type="entry name" value="TF_LuxR_autoind-bd_dom"/>
</dbReference>
<dbReference type="InterPro" id="IPR036693">
    <property type="entry name" value="TF_LuxR_autoind-bd_dom_sf"/>
</dbReference>
<dbReference type="InterPro" id="IPR000792">
    <property type="entry name" value="Tscrpt_reg_LuxR_C"/>
</dbReference>
<dbReference type="InterPro" id="IPR036388">
    <property type="entry name" value="WH-like_DNA-bd_sf"/>
</dbReference>
<dbReference type="PANTHER" id="PTHR44688">
    <property type="entry name" value="DNA-BINDING TRANSCRIPTIONAL ACTIVATOR DEVR_DOSR"/>
    <property type="match status" value="1"/>
</dbReference>
<dbReference type="PANTHER" id="PTHR44688:SF16">
    <property type="entry name" value="DNA-BINDING TRANSCRIPTIONAL ACTIVATOR DEVR_DOSR"/>
    <property type="match status" value="1"/>
</dbReference>
<dbReference type="Pfam" id="PF03472">
    <property type="entry name" value="Autoind_bind"/>
    <property type="match status" value="1"/>
</dbReference>
<dbReference type="Pfam" id="PF00196">
    <property type="entry name" value="GerE"/>
    <property type="match status" value="1"/>
</dbReference>
<dbReference type="PRINTS" id="PR00038">
    <property type="entry name" value="HTHLUXR"/>
</dbReference>
<dbReference type="SMART" id="SM00421">
    <property type="entry name" value="HTH_LUXR"/>
    <property type="match status" value="1"/>
</dbReference>
<dbReference type="SUPFAM" id="SSF46894">
    <property type="entry name" value="C-terminal effector domain of the bipartite response regulators"/>
    <property type="match status" value="1"/>
</dbReference>
<dbReference type="SUPFAM" id="SSF75516">
    <property type="entry name" value="Pheromone-binding domain of LuxR-like quorum-sensing transcription factors"/>
    <property type="match status" value="1"/>
</dbReference>
<dbReference type="PROSITE" id="PS50043">
    <property type="entry name" value="HTH_LUXR_2"/>
    <property type="match status" value="1"/>
</dbReference>
<accession>Q8YAY5</accession>
<keyword id="KW-0010">Activator</keyword>
<keyword id="KW-0238">DNA-binding</keyword>
<keyword id="KW-0673">Quorum sensing</keyword>
<keyword id="KW-0678">Repressor</keyword>
<keyword id="KW-0804">Transcription</keyword>
<keyword id="KW-0805">Transcription regulation</keyword>
<name>VJBR_BRUME</name>
<comment type="function">
    <text evidence="3 4 5 6">Transcriptional regulator involved in the global control of Brucella gene expression. Mediates the effects of the quorum sensing autoinducer C12-HSL (N-dodecanoyl-homoserine lactone) on a large and diverse number of genes, including the virB operon and the flagellar genes fliF and flgE, which are activated in the absence of C12-HSL. Regulates virulence factors as well as several membrane structures. Implicated in the control of outer membrane composition. Plays a role in the expression of genes involved in the EPS synthesis and/or export. Mediates the inhibitory effect of C12-HSL on B.melitensis intracellular replication. Could activate expression of ftcR.</text>
</comment>
<comment type="disruption phenotype">
    <text evidence="3">Cells show down-regulated expression of both virB operon and flagellar genes either during culture in bacteriological medium or during intracellular infection. They also show no flgE or fliC production between the end of the latent phase of growth and the beginning of the exponential phase. The vjbR mutant is also strongly attenuated in a mouse model of infection, probably because it is defective in intracellular survival. When cultures reach high density, cells aggregate and form clumps. The mutant is able to produce EPS containing alpha-mannopyranosyl and/or alpha-glucopyranosyl residues as well as a beta-linked glucan that seem to be a component of the extracellular matrix of the aggregates.</text>
</comment>
<comment type="miscellaneous">
    <text evidence="5">As bacterial aggregation is one of the initial steps of biofilm formation, the clumping phenotype observed in the vjbR mutant suggests that B.melitensis might be able to form biofilms.</text>
</comment>
<comment type="sequence caution" evidence="7">
    <conflict type="erroneous initiation">
        <sequence resource="EMBL-CDS" id="AAL54358"/>
    </conflict>
</comment>
<protein>
    <recommendedName>
        <fullName evidence="7">HTH-type quorum sensing-dependent transcriptional regulator VjbR</fullName>
    </recommendedName>
</protein>
<reference key="1">
    <citation type="journal article" date="2002" name="Proc. Natl. Acad. Sci. U.S.A.">
        <title>The genome sequence of the facultative intracellular pathogen Brucella melitensis.</title>
        <authorList>
            <person name="DelVecchio V.G."/>
            <person name="Kapatral V."/>
            <person name="Redkar R.J."/>
            <person name="Patra G."/>
            <person name="Mujer C."/>
            <person name="Los T."/>
            <person name="Ivanova N."/>
            <person name="Anderson I."/>
            <person name="Bhattacharyya A."/>
            <person name="Lykidis A."/>
            <person name="Reznik G."/>
            <person name="Jablonski L."/>
            <person name="Larsen N."/>
            <person name="D'Souza M."/>
            <person name="Bernal A."/>
            <person name="Mazur M."/>
            <person name="Goltsman E."/>
            <person name="Selkov E."/>
            <person name="Elzer P.H."/>
            <person name="Hagius S."/>
            <person name="O'Callaghan D."/>
            <person name="Letesson J.-J."/>
            <person name="Haselkorn R."/>
            <person name="Kyrpides N.C."/>
            <person name="Overbeek R."/>
        </authorList>
    </citation>
    <scope>NUCLEOTIDE SEQUENCE [LARGE SCALE GENOMIC DNA]</scope>
    <source>
        <strain>ATCC 23456 / CCUG 17765 / NCTC 10094 / 16M</strain>
    </source>
</reference>
<reference key="2">
    <citation type="journal article" date="2005" name="Cell. Microbiol.">
        <title>A quorum-sensing regulator controls expression of both the type IV secretion system and the flagellar apparatus of Brucella melitensis.</title>
        <authorList>
            <person name="Delrue R.-M."/>
            <person name="Deschamps C."/>
            <person name="Leonard S."/>
            <person name="Nijskens C."/>
            <person name="Danese I."/>
            <person name="Schaus J.-M."/>
            <person name="Bonnot S."/>
            <person name="Ferooz J."/>
            <person name="Tibor A."/>
            <person name="De Bolle X."/>
            <person name="Letesson J.-J."/>
        </authorList>
    </citation>
    <scope>FUNCTION IN REGULATION OF VIRB OPERON AND FLAGELLAR GENES</scope>
    <scope>DISRUPTION PHENOTYPE</scope>
    <source>
        <strain>ATCC 23456 / CCUG 17765 / NCTC 10094 / 16M</strain>
    </source>
</reference>
<reference key="3">
    <citation type="journal article" date="2007" name="J. Bacteriol.">
        <title>FtcR is a new master regulator of the flagellar system of Brucella melitensis 16M with homologs in Rhizobiaceae.</title>
        <authorList>
            <person name="Leonard S."/>
            <person name="Ferooz J."/>
            <person name="Haine V."/>
            <person name="Danese I."/>
            <person name="Fretin D."/>
            <person name="Tibor A."/>
            <person name="de Walque S."/>
            <person name="De Bolle X."/>
            <person name="Letesson J.-J."/>
        </authorList>
    </citation>
    <scope>FUNCTION IN REGULATION OF FLAGELLAR GENES</scope>
    <scope>INTERACTION WITH FTCR</scope>
    <source>
        <strain>ATCC 23456 / CCUG 17765 / NCTC 10094 / 16M</strain>
    </source>
</reference>
<reference key="4">
    <citation type="journal article" date="2007" name="J. Bacteriol.">
        <title>Mutations of the quorum sensing-dependent regulator VjbR lead to drastic surface modifications in Brucella melitensis.</title>
        <authorList>
            <person name="Uzureau S."/>
            <person name="Godefroid M."/>
            <person name="Deschamps C."/>
            <person name="Lemaire J."/>
            <person name="De Bolle X."/>
            <person name="Letesson J.-J."/>
        </authorList>
    </citation>
    <scope>FUNCTION IN REGULATION OF MEMBRANE STRUCTURES AND INTERNAL REPLICATION</scope>
    <scope>MUTAGENESIS OF ASP-82</scope>
    <source>
        <strain>ATCC 23456 / CCUG 17765 / NCTC 10094 / 16M</strain>
    </source>
</reference>
<reference key="5">
    <citation type="journal article" date="2010" name="BMC Microbiol.">
        <title>Brucella melitensis VjbR and C12-HSL regulons: contributions of the N-dodecanoyl homoserine lactone signaling molecule and LuxR homologue VjbR to gene expression.</title>
        <authorList>
            <person name="Weeks J.N."/>
            <person name="Galindo C.L."/>
            <person name="Drake K.L."/>
            <person name="Adams G.L."/>
            <person name="Garner H.R."/>
            <person name="Ficht T.A."/>
        </authorList>
    </citation>
    <scope>FUNCTION</scope>
    <source>
        <strain>ATCC 23456 / CCUG 17765 / NCTC 10094 / 16M</strain>
    </source>
</reference>
<organism>
    <name type="scientific">Brucella melitensis biotype 1 (strain ATCC 23456 / CCUG 17765 / NCTC 10094 / 16M)</name>
    <dbReference type="NCBI Taxonomy" id="224914"/>
    <lineage>
        <taxon>Bacteria</taxon>
        <taxon>Pseudomonadati</taxon>
        <taxon>Pseudomonadota</taxon>
        <taxon>Alphaproteobacteria</taxon>
        <taxon>Hyphomicrobiales</taxon>
        <taxon>Brucellaceae</taxon>
        <taxon>Brucella/Ochrobactrum group</taxon>
        <taxon>Brucella</taxon>
    </lineage>
</organism>
<feature type="chain" id="PRO_0000319927" description="HTH-type quorum sensing-dependent transcriptional regulator VjbR">
    <location>
        <begin position="1"/>
        <end position="259"/>
    </location>
</feature>
<feature type="domain" description="HTH luxR-type" evidence="2">
    <location>
        <begin position="183"/>
        <end position="248"/>
    </location>
</feature>
<feature type="DNA-binding region" description="H-T-H motif" evidence="2">
    <location>
        <begin position="207"/>
        <end position="226"/>
    </location>
</feature>
<feature type="region of interest" description="C12-HSL binding" evidence="1">
    <location>
        <begin position="76"/>
        <end position="179"/>
    </location>
</feature>
<feature type="mutagenesis site" description="Behaves like a constitutive regulator, forms cell aggregates." evidence="5">
    <original>D</original>
    <variation>A</variation>
    <location>
        <position position="82"/>
    </location>
</feature>
<proteinExistence type="evidence at protein level"/>
<gene>
    <name type="primary">vjbR</name>
    <name type="ordered locus">BMEII1116</name>
</gene>
<sequence>MSLDLVHFPNYKKTFFGSSFQSDTLALLTRIRDEIGCRYVTHTYRGRVGDCTKVNSADLTVLMTLPATWVARYSSKNYFAIDPVFQEDAPYYRNDTSAIARDLKEDADICPAVAELLHDAEKHGLGNLFIAVSARNPKGVAGCTVFTFEVEDEDRTQFLARMRPRLLSLAGIIHGTVCGCKDANSVASLLTPREVDCLRWAANGKTDGEIAEILSIARWTVVTYLQNAKIKLNCSNRTSAVATALSLGIIDMPEVQHLV</sequence>